<gene>
    <name type="ORF">SPAC7D4.05</name>
</gene>
<proteinExistence type="inferred from homology"/>
<dbReference type="EC" id="3.-.-.-"/>
<dbReference type="EMBL" id="CU329670">
    <property type="protein sequence ID" value="CAB16722.3"/>
    <property type="molecule type" value="Genomic_DNA"/>
</dbReference>
<dbReference type="PIR" id="T39083">
    <property type="entry name" value="T39083"/>
</dbReference>
<dbReference type="RefSeq" id="NP_593854.2">
    <property type="nucleotide sequence ID" value="NM_001019283.2"/>
</dbReference>
<dbReference type="SMR" id="O14262"/>
<dbReference type="BioGRID" id="277957">
    <property type="interactions" value="3"/>
</dbReference>
<dbReference type="FunCoup" id="O14262">
    <property type="interactions" value="309"/>
</dbReference>
<dbReference type="STRING" id="284812.O14262"/>
<dbReference type="PaxDb" id="4896-SPAC7D4.05.1"/>
<dbReference type="EnsemblFungi" id="SPAC7D4.05.1">
    <property type="protein sequence ID" value="SPAC7D4.05.1:pep"/>
    <property type="gene ID" value="SPAC7D4.05"/>
</dbReference>
<dbReference type="KEGG" id="spo:2541452"/>
<dbReference type="PomBase" id="SPAC7D4.05"/>
<dbReference type="VEuPathDB" id="FungiDB:SPAC7D4.05"/>
<dbReference type="eggNOG" id="KOG3085">
    <property type="taxonomic scope" value="Eukaryota"/>
</dbReference>
<dbReference type="HOGENOM" id="CLU_045011_8_0_1"/>
<dbReference type="InParanoid" id="O14262"/>
<dbReference type="OMA" id="GARSANW"/>
<dbReference type="PRO" id="PR:O14262"/>
<dbReference type="Proteomes" id="UP000002485">
    <property type="component" value="Chromosome I"/>
</dbReference>
<dbReference type="GO" id="GO:0005829">
    <property type="term" value="C:cytosol"/>
    <property type="evidence" value="ECO:0007005"/>
    <property type="project" value="PomBase"/>
</dbReference>
<dbReference type="GO" id="GO:0005634">
    <property type="term" value="C:nucleus"/>
    <property type="evidence" value="ECO:0007005"/>
    <property type="project" value="PomBase"/>
</dbReference>
<dbReference type="GO" id="GO:0016791">
    <property type="term" value="F:phosphatase activity"/>
    <property type="evidence" value="ECO:0000255"/>
    <property type="project" value="PomBase"/>
</dbReference>
<dbReference type="CDD" id="cd16415">
    <property type="entry name" value="HAD_dREG-2_like"/>
    <property type="match status" value="1"/>
</dbReference>
<dbReference type="Gene3D" id="3.40.50.1000">
    <property type="entry name" value="HAD superfamily/HAD-like"/>
    <property type="match status" value="1"/>
</dbReference>
<dbReference type="Gene3D" id="1.10.150.720">
    <property type="entry name" value="Haloacid dehalogenase-like hydrolase"/>
    <property type="match status" value="1"/>
</dbReference>
<dbReference type="InterPro" id="IPR051828">
    <property type="entry name" value="HAD-like_hydrolase_domain"/>
</dbReference>
<dbReference type="InterPro" id="IPR036412">
    <property type="entry name" value="HAD-like_sf"/>
</dbReference>
<dbReference type="InterPro" id="IPR006439">
    <property type="entry name" value="HAD-SF_hydro_IA"/>
</dbReference>
<dbReference type="InterPro" id="IPR011949">
    <property type="entry name" value="HAD-SF_hydro_IA_REG-2-like"/>
</dbReference>
<dbReference type="InterPro" id="IPR044924">
    <property type="entry name" value="HAD-SF_hydro_IA_REG-2-like_cap"/>
</dbReference>
<dbReference type="InterPro" id="IPR023214">
    <property type="entry name" value="HAD_sf"/>
</dbReference>
<dbReference type="NCBIfam" id="TIGR02252">
    <property type="entry name" value="DREG-2"/>
    <property type="match status" value="1"/>
</dbReference>
<dbReference type="NCBIfam" id="TIGR01549">
    <property type="entry name" value="HAD-SF-IA-v1"/>
    <property type="match status" value="1"/>
</dbReference>
<dbReference type="PANTHER" id="PTHR46191">
    <property type="match status" value="1"/>
</dbReference>
<dbReference type="PANTHER" id="PTHR46191:SF2">
    <property type="entry name" value="HALOACID DEHALOGENASE-LIKE HYDROLASE DOMAIN-CONTAINING PROTEIN 3"/>
    <property type="match status" value="1"/>
</dbReference>
<dbReference type="Pfam" id="PF00702">
    <property type="entry name" value="Hydrolase"/>
    <property type="match status" value="1"/>
</dbReference>
<dbReference type="SFLD" id="SFLDG01129">
    <property type="entry name" value="C1.5:_HAD__Beta-PGM__Phosphata"/>
    <property type="match status" value="1"/>
</dbReference>
<dbReference type="SFLD" id="SFLDS00003">
    <property type="entry name" value="Haloacid_Dehalogenase"/>
    <property type="match status" value="1"/>
</dbReference>
<dbReference type="SUPFAM" id="SSF56784">
    <property type="entry name" value="HAD-like"/>
    <property type="match status" value="1"/>
</dbReference>
<reference key="1">
    <citation type="journal article" date="2002" name="Nature">
        <title>The genome sequence of Schizosaccharomyces pombe.</title>
        <authorList>
            <person name="Wood V."/>
            <person name="Gwilliam R."/>
            <person name="Rajandream M.A."/>
            <person name="Lyne M.H."/>
            <person name="Lyne R."/>
            <person name="Stewart A."/>
            <person name="Sgouros J.G."/>
            <person name="Peat N."/>
            <person name="Hayles J."/>
            <person name="Baker S.G."/>
            <person name="Basham D."/>
            <person name="Bowman S."/>
            <person name="Brooks K."/>
            <person name="Brown D."/>
            <person name="Brown S."/>
            <person name="Chillingworth T."/>
            <person name="Churcher C.M."/>
            <person name="Collins M."/>
            <person name="Connor R."/>
            <person name="Cronin A."/>
            <person name="Davis P."/>
            <person name="Feltwell T."/>
            <person name="Fraser A."/>
            <person name="Gentles S."/>
            <person name="Goble A."/>
            <person name="Hamlin N."/>
            <person name="Harris D.E."/>
            <person name="Hidalgo J."/>
            <person name="Hodgson G."/>
            <person name="Holroyd S."/>
            <person name="Hornsby T."/>
            <person name="Howarth S."/>
            <person name="Huckle E.J."/>
            <person name="Hunt S."/>
            <person name="Jagels K."/>
            <person name="James K.D."/>
            <person name="Jones L."/>
            <person name="Jones M."/>
            <person name="Leather S."/>
            <person name="McDonald S."/>
            <person name="McLean J."/>
            <person name="Mooney P."/>
            <person name="Moule S."/>
            <person name="Mungall K.L."/>
            <person name="Murphy L.D."/>
            <person name="Niblett D."/>
            <person name="Odell C."/>
            <person name="Oliver K."/>
            <person name="O'Neil S."/>
            <person name="Pearson D."/>
            <person name="Quail M.A."/>
            <person name="Rabbinowitsch E."/>
            <person name="Rutherford K.M."/>
            <person name="Rutter S."/>
            <person name="Saunders D."/>
            <person name="Seeger K."/>
            <person name="Sharp S."/>
            <person name="Skelton J."/>
            <person name="Simmonds M.N."/>
            <person name="Squares R."/>
            <person name="Squares S."/>
            <person name="Stevens K."/>
            <person name="Taylor K."/>
            <person name="Taylor R.G."/>
            <person name="Tivey A."/>
            <person name="Walsh S.V."/>
            <person name="Warren T."/>
            <person name="Whitehead S."/>
            <person name="Woodward J.R."/>
            <person name="Volckaert G."/>
            <person name="Aert R."/>
            <person name="Robben J."/>
            <person name="Grymonprez B."/>
            <person name="Weltjens I."/>
            <person name="Vanstreels E."/>
            <person name="Rieger M."/>
            <person name="Schaefer M."/>
            <person name="Mueller-Auer S."/>
            <person name="Gabel C."/>
            <person name="Fuchs M."/>
            <person name="Duesterhoeft A."/>
            <person name="Fritzc C."/>
            <person name="Holzer E."/>
            <person name="Moestl D."/>
            <person name="Hilbert H."/>
            <person name="Borzym K."/>
            <person name="Langer I."/>
            <person name="Beck A."/>
            <person name="Lehrach H."/>
            <person name="Reinhardt R."/>
            <person name="Pohl T.M."/>
            <person name="Eger P."/>
            <person name="Zimmermann W."/>
            <person name="Wedler H."/>
            <person name="Wambutt R."/>
            <person name="Purnelle B."/>
            <person name="Goffeau A."/>
            <person name="Cadieu E."/>
            <person name="Dreano S."/>
            <person name="Gloux S."/>
            <person name="Lelaure V."/>
            <person name="Mottier S."/>
            <person name="Galibert F."/>
            <person name="Aves S.J."/>
            <person name="Xiang Z."/>
            <person name="Hunt C."/>
            <person name="Moore K."/>
            <person name="Hurst S.M."/>
            <person name="Lucas M."/>
            <person name="Rochet M."/>
            <person name="Gaillardin C."/>
            <person name="Tallada V.A."/>
            <person name="Garzon A."/>
            <person name="Thode G."/>
            <person name="Daga R.R."/>
            <person name="Cruzado L."/>
            <person name="Jimenez J."/>
            <person name="Sanchez M."/>
            <person name="del Rey F."/>
            <person name="Benito J."/>
            <person name="Dominguez A."/>
            <person name="Revuelta J.L."/>
            <person name="Moreno S."/>
            <person name="Armstrong J."/>
            <person name="Forsburg S.L."/>
            <person name="Cerutti L."/>
            <person name="Lowe T."/>
            <person name="McCombie W.R."/>
            <person name="Paulsen I."/>
            <person name="Potashkin J."/>
            <person name="Shpakovski G.V."/>
            <person name="Ussery D."/>
            <person name="Barrell B.G."/>
            <person name="Nurse P."/>
        </authorList>
    </citation>
    <scope>NUCLEOTIDE SEQUENCE [LARGE SCALE GENOMIC DNA]</scope>
    <source>
        <strain>972 / ATCC 24843</strain>
    </source>
</reference>
<reference key="2">
    <citation type="journal article" date="2011" name="Science">
        <title>Comparative functional genomics of the fission yeasts.</title>
        <authorList>
            <person name="Rhind N."/>
            <person name="Chen Z."/>
            <person name="Yassour M."/>
            <person name="Thompson D.A."/>
            <person name="Haas B.J."/>
            <person name="Habib N."/>
            <person name="Wapinski I."/>
            <person name="Roy S."/>
            <person name="Lin M.F."/>
            <person name="Heiman D.I."/>
            <person name="Young S.K."/>
            <person name="Furuya K."/>
            <person name="Guo Y."/>
            <person name="Pidoux A."/>
            <person name="Chen H.M."/>
            <person name="Robbertse B."/>
            <person name="Goldberg J.M."/>
            <person name="Aoki K."/>
            <person name="Bayne E.H."/>
            <person name="Berlin A.M."/>
            <person name="Desjardins C.A."/>
            <person name="Dobbs E."/>
            <person name="Dukaj L."/>
            <person name="Fan L."/>
            <person name="FitzGerald M.G."/>
            <person name="French C."/>
            <person name="Gujja S."/>
            <person name="Hansen K."/>
            <person name="Keifenheim D."/>
            <person name="Levin J.Z."/>
            <person name="Mosher R.A."/>
            <person name="Mueller C.A."/>
            <person name="Pfiffner J."/>
            <person name="Priest M."/>
            <person name="Russ C."/>
            <person name="Smialowska A."/>
            <person name="Swoboda P."/>
            <person name="Sykes S.M."/>
            <person name="Vaughn M."/>
            <person name="Vengrova S."/>
            <person name="Yoder R."/>
            <person name="Zeng Q."/>
            <person name="Allshire R."/>
            <person name="Baulcombe D."/>
            <person name="Birren B.W."/>
            <person name="Brown W."/>
            <person name="Ekwall K."/>
            <person name="Kellis M."/>
            <person name="Leatherwood J."/>
            <person name="Levin H."/>
            <person name="Margalit H."/>
            <person name="Martienssen R."/>
            <person name="Nieduszynski C.A."/>
            <person name="Spatafora J.W."/>
            <person name="Friedman N."/>
            <person name="Dalgaard J.Z."/>
            <person name="Baumann P."/>
            <person name="Niki H."/>
            <person name="Regev A."/>
            <person name="Nusbaum C."/>
        </authorList>
    </citation>
    <scope>REVISION OF GENE MODEL</scope>
</reference>
<reference key="3">
    <citation type="journal article" date="2006" name="Nat. Biotechnol.">
        <title>ORFeome cloning and global analysis of protein localization in the fission yeast Schizosaccharomyces pombe.</title>
        <authorList>
            <person name="Matsuyama A."/>
            <person name="Arai R."/>
            <person name="Yashiroda Y."/>
            <person name="Shirai A."/>
            <person name="Kamata A."/>
            <person name="Sekido S."/>
            <person name="Kobayashi Y."/>
            <person name="Hashimoto A."/>
            <person name="Hamamoto M."/>
            <person name="Hiraoka Y."/>
            <person name="Horinouchi S."/>
            <person name="Yoshida M."/>
        </authorList>
    </citation>
    <scope>SUBCELLULAR LOCATION [LARGE SCALE ANALYSIS]</scope>
</reference>
<evidence type="ECO:0000269" key="1">
    <source>
    </source>
</evidence>
<evidence type="ECO:0000305" key="2"/>
<feature type="chain" id="PRO_0000314095" description="Putative uncharacterized hydrolase C7D4.05">
    <location>
        <begin position="1"/>
        <end position="228"/>
    </location>
</feature>
<organism>
    <name type="scientific">Schizosaccharomyces pombe (strain 972 / ATCC 24843)</name>
    <name type="common">Fission yeast</name>
    <dbReference type="NCBI Taxonomy" id="284812"/>
    <lineage>
        <taxon>Eukaryota</taxon>
        <taxon>Fungi</taxon>
        <taxon>Dikarya</taxon>
        <taxon>Ascomycota</taxon>
        <taxon>Taphrinomycotina</taxon>
        <taxon>Schizosaccharomycetes</taxon>
        <taxon>Schizosaccharomycetales</taxon>
        <taxon>Schizosaccharomycetaceae</taxon>
        <taxon>Schizosaccharomyces</taxon>
    </lineage>
</organism>
<sequence length="228" mass="26598">MIPSKNIQKIKLVTFDAFGTILHLSKPVPIVYSEVAQKYGVHATIDEIEHNSNKAFKDFSEKHKNHGKKSGLNPHDWWIKVIEHSFPTPVPAEMAEELWSYFSKKTGYTIHPLLIDFLKRNKEERKYIIGIISNTDERIRTVLEDYGIDHLIDIYAFSYDVGFEKPSREIFDYAMEKAVKLLGQEIQPEECMHLGDDLIKDVSAARNIQWNAEYCDIKTNFLKYFEQK</sequence>
<comment type="subcellular location">
    <subcellularLocation>
        <location evidence="1">Cytoplasm</location>
    </subcellularLocation>
    <subcellularLocation>
        <location evidence="1">Nucleus</location>
    </subcellularLocation>
</comment>
<comment type="similarity">
    <text evidence="2">Belongs to the HAD-like hydrolase superfamily.</text>
</comment>
<protein>
    <recommendedName>
        <fullName>Putative uncharacterized hydrolase C7D4.05</fullName>
        <ecNumber>3.-.-.-</ecNumber>
    </recommendedName>
</protein>
<accession>O14262</accession>
<keyword id="KW-0963">Cytoplasm</keyword>
<keyword id="KW-0378">Hydrolase</keyword>
<keyword id="KW-0539">Nucleus</keyword>
<keyword id="KW-1185">Reference proteome</keyword>
<name>YFP5_SCHPO</name>